<dbReference type="EMBL" id="AE000520">
    <property type="protein sequence ID" value="AAC65361.1"/>
    <property type="molecule type" value="Genomic_DNA"/>
</dbReference>
<dbReference type="PIR" id="A71333">
    <property type="entry name" value="A71333"/>
</dbReference>
<dbReference type="IntAct" id="O83385">
    <property type="interactions" value="6"/>
</dbReference>
<dbReference type="EnsemblBacteria" id="AAC65361">
    <property type="protein sequence ID" value="AAC65361"/>
    <property type="gene ID" value="TP_0370"/>
</dbReference>
<dbReference type="KEGG" id="tpa:TP_0370"/>
<dbReference type="KEGG" id="tpw:TPANIC_0370"/>
<dbReference type="HOGENOM" id="CLU_153956_0_0_12"/>
<dbReference type="Proteomes" id="UP000000811">
    <property type="component" value="Chromosome"/>
</dbReference>
<reference key="1">
    <citation type="journal article" date="1998" name="Science">
        <title>Complete genome sequence of Treponema pallidum, the syphilis spirochete.</title>
        <authorList>
            <person name="Fraser C.M."/>
            <person name="Norris S.J."/>
            <person name="Weinstock G.M."/>
            <person name="White O."/>
            <person name="Sutton G.G."/>
            <person name="Dodson R.J."/>
            <person name="Gwinn M.L."/>
            <person name="Hickey E.K."/>
            <person name="Clayton R.A."/>
            <person name="Ketchum K.A."/>
            <person name="Sodergren E."/>
            <person name="Hardham J.M."/>
            <person name="McLeod M.P."/>
            <person name="Salzberg S.L."/>
            <person name="Peterson J.D."/>
            <person name="Khalak H.G."/>
            <person name="Richardson D.L."/>
            <person name="Howell J.K."/>
            <person name="Chidambaram M."/>
            <person name="Utterback T.R."/>
            <person name="McDonald L.A."/>
            <person name="Artiach P."/>
            <person name="Bowman C."/>
            <person name="Cotton M.D."/>
            <person name="Fujii C."/>
            <person name="Garland S.A."/>
            <person name="Hatch B."/>
            <person name="Horst K."/>
            <person name="Roberts K.M."/>
            <person name="Sandusky M."/>
            <person name="Weidman J.F."/>
            <person name="Smith H.O."/>
            <person name="Venter J.C."/>
        </authorList>
    </citation>
    <scope>NUCLEOTIDE SEQUENCE [LARGE SCALE GENOMIC DNA]</scope>
    <source>
        <strain>Nichols</strain>
    </source>
</reference>
<protein>
    <recommendedName>
        <fullName>Uncharacterized protein TP_0370</fullName>
    </recommendedName>
</protein>
<accession>O83385</accession>
<gene>
    <name type="ordered locus">TP_0370</name>
</gene>
<organism>
    <name type="scientific">Treponema pallidum (strain Nichols)</name>
    <dbReference type="NCBI Taxonomy" id="243276"/>
    <lineage>
        <taxon>Bacteria</taxon>
        <taxon>Pseudomonadati</taxon>
        <taxon>Spirochaetota</taxon>
        <taxon>Spirochaetia</taxon>
        <taxon>Spirochaetales</taxon>
        <taxon>Treponemataceae</taxon>
        <taxon>Treponema</taxon>
    </lineage>
</organism>
<feature type="chain" id="PRO_0000202243" description="Uncharacterized protein TP_0370">
    <location>
        <begin position="1"/>
        <end position="138"/>
    </location>
</feature>
<feature type="region of interest" description="Disordered" evidence="1">
    <location>
        <begin position="89"/>
        <end position="138"/>
    </location>
</feature>
<proteinExistence type="predicted"/>
<name>Y370_TREPA</name>
<keyword id="KW-1185">Reference proteome</keyword>
<sequence length="138" mass="15998">MSAQTQRLHPPFYDKRTQRVNSPFSLPAPKTQEKKYLCLLGTVDSVCAPLYDPPLAFTIPQAEVSHMNERNKLLARALYSCVPHVQGSDDYEDDFEDSDFQDGDFDDFEDEDGFDDDDDFEDDDFEYEDEDNDLDFDE</sequence>
<evidence type="ECO:0000256" key="1">
    <source>
        <dbReference type="SAM" id="MobiDB-lite"/>
    </source>
</evidence>